<reference key="1">
    <citation type="journal article" date="2011" name="J. Bacteriol.">
        <title>Complete genome and proteome of Acholeplasma laidlawii.</title>
        <authorList>
            <person name="Lazarev V.N."/>
            <person name="Levitskii S.A."/>
            <person name="Basovskii Y.I."/>
            <person name="Chukin M.M."/>
            <person name="Akopian T.A."/>
            <person name="Vereshchagin V.V."/>
            <person name="Kostrjukova E.S."/>
            <person name="Kovaleva G.Y."/>
            <person name="Kazanov M.D."/>
            <person name="Malko D.B."/>
            <person name="Vitreschak A.G."/>
            <person name="Sernova N.V."/>
            <person name="Gelfand M.S."/>
            <person name="Demina I.A."/>
            <person name="Serebryakova M.V."/>
            <person name="Galyamina M.A."/>
            <person name="Vtyurin N.N."/>
            <person name="Rogov S.I."/>
            <person name="Alexeev D.G."/>
            <person name="Ladygina V.G."/>
            <person name="Govorun V.M."/>
        </authorList>
    </citation>
    <scope>NUCLEOTIDE SEQUENCE [LARGE SCALE GENOMIC DNA]</scope>
    <source>
        <strain>PG-8A</strain>
    </source>
</reference>
<organism>
    <name type="scientific">Acholeplasma laidlawii (strain PG-8A)</name>
    <dbReference type="NCBI Taxonomy" id="441768"/>
    <lineage>
        <taxon>Bacteria</taxon>
        <taxon>Bacillati</taxon>
        <taxon>Mycoplasmatota</taxon>
        <taxon>Mollicutes</taxon>
        <taxon>Acholeplasmatales</taxon>
        <taxon>Acholeplasmataceae</taxon>
        <taxon>Acholeplasma</taxon>
    </lineage>
</organism>
<accession>A9NFF0</accession>
<protein>
    <recommendedName>
        <fullName evidence="1">Beta-ketoacyl-[acyl-carrier-protein] synthase III</fullName>
        <shortName evidence="1">Beta-ketoacyl-ACP synthase III</shortName>
        <shortName evidence="1">KAS III</shortName>
        <ecNumber evidence="1">2.3.1.180</ecNumber>
    </recommendedName>
    <alternativeName>
        <fullName evidence="1">3-oxoacyl-[acyl-carrier-protein] synthase 3</fullName>
    </alternativeName>
    <alternativeName>
        <fullName evidence="1">3-oxoacyl-[acyl-carrier-protein] synthase III</fullName>
    </alternativeName>
</protein>
<sequence length="310" mass="34122">MKNLPIKIVSTGRYAPDNIMTNDDFSKILDTNDEWITTRTGIKRRHIAQGETAIDMAYKAALKAVENKNYDKEKIDLIIVASITSPVKTPSIANLIQAKLGLNHKNIVAFDINAACSGFVYAVEIAASMISSGNYKSALVIGSEHMSSILDWEDRSTAILFGDAAGAAIIEVSDNPKDNAYFWNGSRGDDTGILWIDPKVKMAGREVYKFAVDIMPKAIHKVLEKAGLTIDDIDYIIPHQANYRIIQSVAKDMNLPIERFLMNLEEYGNTSAASIPFLLDEHKTNNPEVKRVILVGFGGGFTWGAAILNV</sequence>
<keyword id="KW-0012">Acyltransferase</keyword>
<keyword id="KW-0963">Cytoplasm</keyword>
<keyword id="KW-0275">Fatty acid biosynthesis</keyword>
<keyword id="KW-0276">Fatty acid metabolism</keyword>
<keyword id="KW-0444">Lipid biosynthesis</keyword>
<keyword id="KW-0443">Lipid metabolism</keyword>
<keyword id="KW-0511">Multifunctional enzyme</keyword>
<keyword id="KW-1185">Reference proteome</keyword>
<keyword id="KW-0808">Transferase</keyword>
<dbReference type="EC" id="2.3.1.180" evidence="1"/>
<dbReference type="EMBL" id="CP000896">
    <property type="protein sequence ID" value="ABX81080.1"/>
    <property type="molecule type" value="Genomic_DNA"/>
</dbReference>
<dbReference type="RefSeq" id="WP_012242411.1">
    <property type="nucleotide sequence ID" value="NC_010163.1"/>
</dbReference>
<dbReference type="SMR" id="A9NFF0"/>
<dbReference type="STRING" id="441768.ACL_0461"/>
<dbReference type="GeneID" id="41338641"/>
<dbReference type="KEGG" id="acl:ACL_0461"/>
<dbReference type="eggNOG" id="COG0332">
    <property type="taxonomic scope" value="Bacteria"/>
</dbReference>
<dbReference type="HOGENOM" id="CLU_039592_4_2_14"/>
<dbReference type="OrthoDB" id="9815506at2"/>
<dbReference type="UniPathway" id="UPA00094"/>
<dbReference type="Proteomes" id="UP000008558">
    <property type="component" value="Chromosome"/>
</dbReference>
<dbReference type="GO" id="GO:0005737">
    <property type="term" value="C:cytoplasm"/>
    <property type="evidence" value="ECO:0007669"/>
    <property type="project" value="UniProtKB-SubCell"/>
</dbReference>
<dbReference type="GO" id="GO:0004315">
    <property type="term" value="F:3-oxoacyl-[acyl-carrier-protein] synthase activity"/>
    <property type="evidence" value="ECO:0007669"/>
    <property type="project" value="InterPro"/>
</dbReference>
<dbReference type="GO" id="GO:0033818">
    <property type="term" value="F:beta-ketoacyl-acyl-carrier-protein synthase III activity"/>
    <property type="evidence" value="ECO:0007669"/>
    <property type="project" value="UniProtKB-UniRule"/>
</dbReference>
<dbReference type="GO" id="GO:0006633">
    <property type="term" value="P:fatty acid biosynthetic process"/>
    <property type="evidence" value="ECO:0007669"/>
    <property type="project" value="UniProtKB-UniRule"/>
</dbReference>
<dbReference type="CDD" id="cd00830">
    <property type="entry name" value="KAS_III"/>
    <property type="match status" value="1"/>
</dbReference>
<dbReference type="Gene3D" id="3.40.47.10">
    <property type="match status" value="1"/>
</dbReference>
<dbReference type="HAMAP" id="MF_01815">
    <property type="entry name" value="FabH"/>
    <property type="match status" value="1"/>
</dbReference>
<dbReference type="InterPro" id="IPR013747">
    <property type="entry name" value="ACP_syn_III_C"/>
</dbReference>
<dbReference type="InterPro" id="IPR013751">
    <property type="entry name" value="ACP_syn_III_N"/>
</dbReference>
<dbReference type="InterPro" id="IPR004655">
    <property type="entry name" value="FabH"/>
</dbReference>
<dbReference type="InterPro" id="IPR016039">
    <property type="entry name" value="Thiolase-like"/>
</dbReference>
<dbReference type="NCBIfam" id="TIGR00747">
    <property type="entry name" value="fabH"/>
    <property type="match status" value="1"/>
</dbReference>
<dbReference type="NCBIfam" id="NF006829">
    <property type="entry name" value="PRK09352.1"/>
    <property type="match status" value="1"/>
</dbReference>
<dbReference type="PANTHER" id="PTHR43091">
    <property type="entry name" value="3-OXOACYL-[ACYL-CARRIER-PROTEIN] SYNTHASE"/>
    <property type="match status" value="1"/>
</dbReference>
<dbReference type="PANTHER" id="PTHR43091:SF1">
    <property type="entry name" value="BETA-KETOACYL-[ACYL-CARRIER-PROTEIN] SYNTHASE III, CHLOROPLASTIC"/>
    <property type="match status" value="1"/>
</dbReference>
<dbReference type="Pfam" id="PF08545">
    <property type="entry name" value="ACP_syn_III"/>
    <property type="match status" value="1"/>
</dbReference>
<dbReference type="Pfam" id="PF08541">
    <property type="entry name" value="ACP_syn_III_C"/>
    <property type="match status" value="1"/>
</dbReference>
<dbReference type="SUPFAM" id="SSF53901">
    <property type="entry name" value="Thiolase-like"/>
    <property type="match status" value="1"/>
</dbReference>
<gene>
    <name evidence="1" type="primary">fabH</name>
    <name type="ordered locus">ACL_0461</name>
</gene>
<evidence type="ECO:0000255" key="1">
    <source>
        <dbReference type="HAMAP-Rule" id="MF_01815"/>
    </source>
</evidence>
<proteinExistence type="inferred from homology"/>
<name>FABH_ACHLI</name>
<feature type="chain" id="PRO_1000088304" description="Beta-ketoacyl-[acyl-carrier-protein] synthase III">
    <location>
        <begin position="1"/>
        <end position="310"/>
    </location>
</feature>
<feature type="region of interest" description="ACP-binding" evidence="1">
    <location>
        <begin position="240"/>
        <end position="244"/>
    </location>
</feature>
<feature type="active site" evidence="1">
    <location>
        <position position="116"/>
    </location>
</feature>
<feature type="active site" evidence="1">
    <location>
        <position position="239"/>
    </location>
</feature>
<feature type="active site" evidence="1">
    <location>
        <position position="269"/>
    </location>
</feature>
<comment type="function">
    <text evidence="1">Catalyzes the condensation reaction of fatty acid synthesis by the addition to an acyl acceptor of two carbons from malonyl-ACP. Catalyzes the first condensation reaction which initiates fatty acid synthesis and may therefore play a role in governing the total rate of fatty acid production. Possesses both acetoacetyl-ACP synthase and acetyl transacylase activities. Its substrate specificity determines the biosynthesis of branched-chain and/or straight-chain of fatty acids.</text>
</comment>
<comment type="catalytic activity">
    <reaction evidence="1">
        <text>malonyl-[ACP] + acetyl-CoA + H(+) = 3-oxobutanoyl-[ACP] + CO2 + CoA</text>
        <dbReference type="Rhea" id="RHEA:12080"/>
        <dbReference type="Rhea" id="RHEA-COMP:9623"/>
        <dbReference type="Rhea" id="RHEA-COMP:9625"/>
        <dbReference type="ChEBI" id="CHEBI:15378"/>
        <dbReference type="ChEBI" id="CHEBI:16526"/>
        <dbReference type="ChEBI" id="CHEBI:57287"/>
        <dbReference type="ChEBI" id="CHEBI:57288"/>
        <dbReference type="ChEBI" id="CHEBI:78449"/>
        <dbReference type="ChEBI" id="CHEBI:78450"/>
        <dbReference type="EC" id="2.3.1.180"/>
    </reaction>
</comment>
<comment type="pathway">
    <text evidence="1">Lipid metabolism; fatty acid biosynthesis.</text>
</comment>
<comment type="subunit">
    <text evidence="1">Homodimer.</text>
</comment>
<comment type="subcellular location">
    <subcellularLocation>
        <location evidence="1">Cytoplasm</location>
    </subcellularLocation>
</comment>
<comment type="domain">
    <text evidence="1">The last Arg residue of the ACP-binding site is essential for the weak association between ACP/AcpP and FabH.</text>
</comment>
<comment type="similarity">
    <text evidence="1">Belongs to the thiolase-like superfamily. FabH family.</text>
</comment>